<reference key="1">
    <citation type="journal article" date="2013" name="Plant Physiol.">
        <title>A Nostoc punctiforme Sugar Transporter Necessary to Establish a Cyanobacterium-Plant Symbiosis.</title>
        <authorList>
            <person name="Ekman M."/>
            <person name="Picossi S."/>
            <person name="Campbell E.L."/>
            <person name="Meeks J.C."/>
            <person name="Flores E."/>
        </authorList>
    </citation>
    <scope>NUCLEOTIDE SEQUENCE [LARGE SCALE GENOMIC DNA]</scope>
    <source>
        <strain>ATCC 29133 / PCC 73102</strain>
    </source>
</reference>
<organism>
    <name type="scientific">Nostoc punctiforme (strain ATCC 29133 / PCC 73102)</name>
    <dbReference type="NCBI Taxonomy" id="63737"/>
    <lineage>
        <taxon>Bacteria</taxon>
        <taxon>Bacillati</taxon>
        <taxon>Cyanobacteriota</taxon>
        <taxon>Cyanophyceae</taxon>
        <taxon>Nostocales</taxon>
        <taxon>Nostocaceae</taxon>
        <taxon>Nostoc</taxon>
    </lineage>
</organism>
<name>URE2_NOSP7</name>
<gene>
    <name evidence="1" type="primary">ureB</name>
    <name type="ordered locus">Npun_F0824</name>
</gene>
<feature type="chain" id="PRO_1000188932" description="Urease subunit beta">
    <location>
        <begin position="1"/>
        <end position="101"/>
    </location>
</feature>
<keyword id="KW-0963">Cytoplasm</keyword>
<keyword id="KW-0378">Hydrolase</keyword>
<keyword id="KW-1185">Reference proteome</keyword>
<evidence type="ECO:0000255" key="1">
    <source>
        <dbReference type="HAMAP-Rule" id="MF_01954"/>
    </source>
</evidence>
<sequence length="101" mass="11147">MIPGEIITPAGEIELNVGRPTIKLQVSNTGDRPIQVGSHYHFYEVNTALNFDREQARGMRLDIPAGTAVRFEPGDEKEIILVPLVGTRQVYGFNAKINGNL</sequence>
<comment type="catalytic activity">
    <reaction evidence="1">
        <text>urea + 2 H2O + H(+) = hydrogencarbonate + 2 NH4(+)</text>
        <dbReference type="Rhea" id="RHEA:20557"/>
        <dbReference type="ChEBI" id="CHEBI:15377"/>
        <dbReference type="ChEBI" id="CHEBI:15378"/>
        <dbReference type="ChEBI" id="CHEBI:16199"/>
        <dbReference type="ChEBI" id="CHEBI:17544"/>
        <dbReference type="ChEBI" id="CHEBI:28938"/>
        <dbReference type="EC" id="3.5.1.5"/>
    </reaction>
</comment>
<comment type="pathway">
    <text evidence="1">Nitrogen metabolism; urea degradation; CO(2) and NH(3) from urea (urease route): step 1/1.</text>
</comment>
<comment type="subunit">
    <text evidence="1">Heterotrimer of UreA (gamma), UreB (beta) and UreC (alpha) subunits. Three heterotrimers associate to form the active enzyme.</text>
</comment>
<comment type="subcellular location">
    <subcellularLocation>
        <location evidence="1">Cytoplasm</location>
    </subcellularLocation>
</comment>
<comment type="similarity">
    <text evidence="1">Belongs to the urease beta subunit family.</text>
</comment>
<accession>B2IT65</accession>
<proteinExistence type="inferred from homology"/>
<protein>
    <recommendedName>
        <fullName evidence="1">Urease subunit beta</fullName>
        <ecNumber evidence="1">3.5.1.5</ecNumber>
    </recommendedName>
    <alternativeName>
        <fullName evidence="1">Urea amidohydrolase subunit beta</fullName>
    </alternativeName>
</protein>
<dbReference type="EC" id="3.5.1.5" evidence="1"/>
<dbReference type="EMBL" id="CP001037">
    <property type="protein sequence ID" value="ACC79563.1"/>
    <property type="molecule type" value="Genomic_DNA"/>
</dbReference>
<dbReference type="RefSeq" id="WP_012407585.1">
    <property type="nucleotide sequence ID" value="NC_010628.1"/>
</dbReference>
<dbReference type="SMR" id="B2IT65"/>
<dbReference type="STRING" id="63737.Npun_F0824"/>
<dbReference type="EnsemblBacteria" id="ACC79563">
    <property type="protein sequence ID" value="ACC79563"/>
    <property type="gene ID" value="Npun_F0824"/>
</dbReference>
<dbReference type="KEGG" id="npu:Npun_F0824"/>
<dbReference type="eggNOG" id="COG0832">
    <property type="taxonomic scope" value="Bacteria"/>
</dbReference>
<dbReference type="HOGENOM" id="CLU_129707_1_1_3"/>
<dbReference type="PhylomeDB" id="B2IT65"/>
<dbReference type="UniPathway" id="UPA00258">
    <property type="reaction ID" value="UER00370"/>
</dbReference>
<dbReference type="Proteomes" id="UP000001191">
    <property type="component" value="Chromosome"/>
</dbReference>
<dbReference type="GO" id="GO:0035550">
    <property type="term" value="C:urease complex"/>
    <property type="evidence" value="ECO:0007669"/>
    <property type="project" value="InterPro"/>
</dbReference>
<dbReference type="GO" id="GO:0009039">
    <property type="term" value="F:urease activity"/>
    <property type="evidence" value="ECO:0007669"/>
    <property type="project" value="UniProtKB-UniRule"/>
</dbReference>
<dbReference type="GO" id="GO:0043419">
    <property type="term" value="P:urea catabolic process"/>
    <property type="evidence" value="ECO:0007669"/>
    <property type="project" value="UniProtKB-UniRule"/>
</dbReference>
<dbReference type="CDD" id="cd00407">
    <property type="entry name" value="Urease_beta"/>
    <property type="match status" value="1"/>
</dbReference>
<dbReference type="FunFam" id="2.10.150.10:FF:000001">
    <property type="entry name" value="Urease subunit beta"/>
    <property type="match status" value="1"/>
</dbReference>
<dbReference type="Gene3D" id="2.10.150.10">
    <property type="entry name" value="Urease, beta subunit"/>
    <property type="match status" value="1"/>
</dbReference>
<dbReference type="HAMAP" id="MF_01954">
    <property type="entry name" value="Urease_beta"/>
    <property type="match status" value="1"/>
</dbReference>
<dbReference type="InterPro" id="IPR002019">
    <property type="entry name" value="Urease_beta-like"/>
</dbReference>
<dbReference type="InterPro" id="IPR036461">
    <property type="entry name" value="Urease_betasu_sf"/>
</dbReference>
<dbReference type="InterPro" id="IPR050069">
    <property type="entry name" value="Urease_subunit"/>
</dbReference>
<dbReference type="NCBIfam" id="NF009682">
    <property type="entry name" value="PRK13203.1"/>
    <property type="match status" value="1"/>
</dbReference>
<dbReference type="NCBIfam" id="TIGR00192">
    <property type="entry name" value="urease_beta"/>
    <property type="match status" value="1"/>
</dbReference>
<dbReference type="PANTHER" id="PTHR33569">
    <property type="entry name" value="UREASE"/>
    <property type="match status" value="1"/>
</dbReference>
<dbReference type="PANTHER" id="PTHR33569:SF1">
    <property type="entry name" value="UREASE"/>
    <property type="match status" value="1"/>
</dbReference>
<dbReference type="Pfam" id="PF00699">
    <property type="entry name" value="Urease_beta"/>
    <property type="match status" value="1"/>
</dbReference>
<dbReference type="SUPFAM" id="SSF51278">
    <property type="entry name" value="Urease, beta-subunit"/>
    <property type="match status" value="1"/>
</dbReference>